<dbReference type="EC" id="2.1.1.107" evidence="1"/>
<dbReference type="EC" id="1.3.1.76" evidence="1"/>
<dbReference type="EC" id="4.99.1.4" evidence="1"/>
<dbReference type="EMBL" id="CP001616">
    <property type="protein sequence ID" value="ACQ94140.1"/>
    <property type="molecule type" value="Genomic_DNA"/>
</dbReference>
<dbReference type="RefSeq" id="WP_015879589.1">
    <property type="nucleotide sequence ID" value="NC_012691.1"/>
</dbReference>
<dbReference type="SMR" id="C4LAG5"/>
<dbReference type="STRING" id="595494.Tola_2546"/>
<dbReference type="KEGG" id="tau:Tola_2546"/>
<dbReference type="eggNOG" id="COG0007">
    <property type="taxonomic scope" value="Bacteria"/>
</dbReference>
<dbReference type="eggNOG" id="COG1648">
    <property type="taxonomic scope" value="Bacteria"/>
</dbReference>
<dbReference type="HOGENOM" id="CLU_011276_2_0_6"/>
<dbReference type="OrthoDB" id="9815856at2"/>
<dbReference type="UniPathway" id="UPA00148">
    <property type="reaction ID" value="UER00211"/>
</dbReference>
<dbReference type="UniPathway" id="UPA00148">
    <property type="reaction ID" value="UER00222"/>
</dbReference>
<dbReference type="UniPathway" id="UPA00262">
    <property type="reaction ID" value="UER00211"/>
</dbReference>
<dbReference type="UniPathway" id="UPA00262">
    <property type="reaction ID" value="UER00222"/>
</dbReference>
<dbReference type="UniPathway" id="UPA00262">
    <property type="reaction ID" value="UER00376"/>
</dbReference>
<dbReference type="Proteomes" id="UP000009073">
    <property type="component" value="Chromosome"/>
</dbReference>
<dbReference type="GO" id="GO:0051287">
    <property type="term" value="F:NAD binding"/>
    <property type="evidence" value="ECO:0007669"/>
    <property type="project" value="InterPro"/>
</dbReference>
<dbReference type="GO" id="GO:0043115">
    <property type="term" value="F:precorrin-2 dehydrogenase activity"/>
    <property type="evidence" value="ECO:0007669"/>
    <property type="project" value="UniProtKB-UniRule"/>
</dbReference>
<dbReference type="GO" id="GO:0051266">
    <property type="term" value="F:sirohydrochlorin ferrochelatase activity"/>
    <property type="evidence" value="ECO:0007669"/>
    <property type="project" value="UniProtKB-EC"/>
</dbReference>
<dbReference type="GO" id="GO:0004851">
    <property type="term" value="F:uroporphyrin-III C-methyltransferase activity"/>
    <property type="evidence" value="ECO:0007669"/>
    <property type="project" value="UniProtKB-UniRule"/>
</dbReference>
<dbReference type="GO" id="GO:0009236">
    <property type="term" value="P:cobalamin biosynthetic process"/>
    <property type="evidence" value="ECO:0007669"/>
    <property type="project" value="UniProtKB-UniRule"/>
</dbReference>
<dbReference type="GO" id="GO:0032259">
    <property type="term" value="P:methylation"/>
    <property type="evidence" value="ECO:0007669"/>
    <property type="project" value="UniProtKB-KW"/>
</dbReference>
<dbReference type="GO" id="GO:0019354">
    <property type="term" value="P:siroheme biosynthetic process"/>
    <property type="evidence" value="ECO:0007669"/>
    <property type="project" value="UniProtKB-UniRule"/>
</dbReference>
<dbReference type="CDD" id="cd11642">
    <property type="entry name" value="SUMT"/>
    <property type="match status" value="1"/>
</dbReference>
<dbReference type="FunFam" id="3.30.160.110:FF:000001">
    <property type="entry name" value="Siroheme synthase"/>
    <property type="match status" value="1"/>
</dbReference>
<dbReference type="FunFam" id="3.30.950.10:FF:000001">
    <property type="entry name" value="Siroheme synthase"/>
    <property type="match status" value="1"/>
</dbReference>
<dbReference type="FunFam" id="3.40.1010.10:FF:000001">
    <property type="entry name" value="Siroheme synthase"/>
    <property type="match status" value="1"/>
</dbReference>
<dbReference type="Gene3D" id="3.40.1010.10">
    <property type="entry name" value="Cobalt-precorrin-4 Transmethylase, Domain 1"/>
    <property type="match status" value="1"/>
</dbReference>
<dbReference type="Gene3D" id="3.30.950.10">
    <property type="entry name" value="Methyltransferase, Cobalt-precorrin-4 Transmethylase, Domain 2"/>
    <property type="match status" value="1"/>
</dbReference>
<dbReference type="Gene3D" id="3.40.50.720">
    <property type="entry name" value="NAD(P)-binding Rossmann-like Domain"/>
    <property type="match status" value="1"/>
</dbReference>
<dbReference type="Gene3D" id="1.10.8.210">
    <property type="entry name" value="Sirohaem synthase, dimerisation domain"/>
    <property type="match status" value="1"/>
</dbReference>
<dbReference type="Gene3D" id="3.30.160.110">
    <property type="entry name" value="Siroheme synthase, domain 2"/>
    <property type="match status" value="1"/>
</dbReference>
<dbReference type="HAMAP" id="MF_01646">
    <property type="entry name" value="Siroheme_synth"/>
    <property type="match status" value="1"/>
</dbReference>
<dbReference type="InterPro" id="IPR000878">
    <property type="entry name" value="4pyrrol_Mease"/>
</dbReference>
<dbReference type="InterPro" id="IPR035996">
    <property type="entry name" value="4pyrrol_Methylase_sf"/>
</dbReference>
<dbReference type="InterPro" id="IPR014777">
    <property type="entry name" value="4pyrrole_Mease_sub1"/>
</dbReference>
<dbReference type="InterPro" id="IPR014776">
    <property type="entry name" value="4pyrrole_Mease_sub2"/>
</dbReference>
<dbReference type="InterPro" id="IPR006366">
    <property type="entry name" value="CobA/CysG_C"/>
</dbReference>
<dbReference type="InterPro" id="IPR036291">
    <property type="entry name" value="NAD(P)-bd_dom_sf"/>
</dbReference>
<dbReference type="InterPro" id="IPR050161">
    <property type="entry name" value="Siro_Cobalamin_biosynth"/>
</dbReference>
<dbReference type="InterPro" id="IPR037115">
    <property type="entry name" value="Sirohaem_synt_dimer_dom_sf"/>
</dbReference>
<dbReference type="InterPro" id="IPR012409">
    <property type="entry name" value="Sirohaem_synth"/>
</dbReference>
<dbReference type="InterPro" id="IPR028281">
    <property type="entry name" value="Sirohaem_synthase_central"/>
</dbReference>
<dbReference type="InterPro" id="IPR019478">
    <property type="entry name" value="Sirohaem_synthase_dimer_dom"/>
</dbReference>
<dbReference type="InterPro" id="IPR006367">
    <property type="entry name" value="Sirohaem_synthase_N"/>
</dbReference>
<dbReference type="InterPro" id="IPR003043">
    <property type="entry name" value="Uropor_MeTrfase_CS"/>
</dbReference>
<dbReference type="NCBIfam" id="TIGR01469">
    <property type="entry name" value="cobA_cysG_Cterm"/>
    <property type="match status" value="1"/>
</dbReference>
<dbReference type="NCBIfam" id="TIGR01470">
    <property type="entry name" value="cysG_Nterm"/>
    <property type="match status" value="1"/>
</dbReference>
<dbReference type="NCBIfam" id="NF004790">
    <property type="entry name" value="PRK06136.1"/>
    <property type="match status" value="1"/>
</dbReference>
<dbReference type="NCBIfam" id="NF007922">
    <property type="entry name" value="PRK10637.1"/>
    <property type="match status" value="1"/>
</dbReference>
<dbReference type="PANTHER" id="PTHR45790:SF1">
    <property type="entry name" value="SIROHEME SYNTHASE"/>
    <property type="match status" value="1"/>
</dbReference>
<dbReference type="PANTHER" id="PTHR45790">
    <property type="entry name" value="SIROHEME SYNTHASE-RELATED"/>
    <property type="match status" value="1"/>
</dbReference>
<dbReference type="Pfam" id="PF10414">
    <property type="entry name" value="CysG_dimeriser"/>
    <property type="match status" value="1"/>
</dbReference>
<dbReference type="Pfam" id="PF13241">
    <property type="entry name" value="NAD_binding_7"/>
    <property type="match status" value="1"/>
</dbReference>
<dbReference type="Pfam" id="PF14824">
    <property type="entry name" value="Sirohm_synth_M"/>
    <property type="match status" value="1"/>
</dbReference>
<dbReference type="Pfam" id="PF00590">
    <property type="entry name" value="TP_methylase"/>
    <property type="match status" value="1"/>
</dbReference>
<dbReference type="PIRSF" id="PIRSF036426">
    <property type="entry name" value="Sirohaem_synth"/>
    <property type="match status" value="1"/>
</dbReference>
<dbReference type="SUPFAM" id="SSF51735">
    <property type="entry name" value="NAD(P)-binding Rossmann-fold domains"/>
    <property type="match status" value="1"/>
</dbReference>
<dbReference type="SUPFAM" id="SSF75615">
    <property type="entry name" value="Siroheme synthase middle domains-like"/>
    <property type="match status" value="1"/>
</dbReference>
<dbReference type="SUPFAM" id="SSF53790">
    <property type="entry name" value="Tetrapyrrole methylase"/>
    <property type="match status" value="1"/>
</dbReference>
<dbReference type="PROSITE" id="PS00839">
    <property type="entry name" value="SUMT_1"/>
    <property type="match status" value="1"/>
</dbReference>
<dbReference type="PROSITE" id="PS00840">
    <property type="entry name" value="SUMT_2"/>
    <property type="match status" value="1"/>
</dbReference>
<name>CYSG_TOLAT</name>
<sequence length="468" mass="50336">MDYLPLFARLNNRAVLLVGGGDIALRKARLLLDAGANLTVVAPSLHEELTELLVGHTYIPSRFTAAYLNDQMLVIAATDDEEVNAEVAAAADAANIWVNVVDDPDRSSFIFPSIIDRSPIMVAVSSGGKAPVLVRMLRERLEALLPKHLGALANLSGEWRNQIKQKLGDITSRRRFWEKAFASPQLATLLETEQHDSAEQWMADQLQADDYAGGEIVLVGAGPGDAGLLTLKGLQQIQQAEVVLYDQLVSPEVLNLVRRDAERISVGKKAGHHSVPQHEINELLLSHARAGKRVVRLKGGDPFMFGRGAEELQAARAEGIPFSVVPGITAAAGATAYAGIPLTHRDSAQSAVFITGHCKQDGEEPDWAALAASNQTLVIYMGLIGSPAITERLIAHGRRPETPVALIERGTTVRQRVLRGTLQELPELAKDAHSPSLIVIGEVAALADTLSWFGGDTASGKEHLINLA</sequence>
<comment type="function">
    <text evidence="1">Multifunctional enzyme that catalyzes the SAM-dependent methylations of uroporphyrinogen III at position C-2 and C-7 to form precorrin-2 via precorrin-1. Then it catalyzes the NAD-dependent ring dehydrogenation of precorrin-2 to yield sirohydrochlorin. Finally, it catalyzes the ferrochelation of sirohydrochlorin to yield siroheme.</text>
</comment>
<comment type="catalytic activity">
    <reaction evidence="1">
        <text>uroporphyrinogen III + 2 S-adenosyl-L-methionine = precorrin-2 + 2 S-adenosyl-L-homocysteine + H(+)</text>
        <dbReference type="Rhea" id="RHEA:32459"/>
        <dbReference type="ChEBI" id="CHEBI:15378"/>
        <dbReference type="ChEBI" id="CHEBI:57308"/>
        <dbReference type="ChEBI" id="CHEBI:57856"/>
        <dbReference type="ChEBI" id="CHEBI:58827"/>
        <dbReference type="ChEBI" id="CHEBI:59789"/>
        <dbReference type="EC" id="2.1.1.107"/>
    </reaction>
</comment>
<comment type="catalytic activity">
    <reaction evidence="1">
        <text>precorrin-2 + NAD(+) = sirohydrochlorin + NADH + 2 H(+)</text>
        <dbReference type="Rhea" id="RHEA:15613"/>
        <dbReference type="ChEBI" id="CHEBI:15378"/>
        <dbReference type="ChEBI" id="CHEBI:57540"/>
        <dbReference type="ChEBI" id="CHEBI:57945"/>
        <dbReference type="ChEBI" id="CHEBI:58351"/>
        <dbReference type="ChEBI" id="CHEBI:58827"/>
        <dbReference type="EC" id="1.3.1.76"/>
    </reaction>
</comment>
<comment type="catalytic activity">
    <reaction evidence="1">
        <text>siroheme + 2 H(+) = sirohydrochlorin + Fe(2+)</text>
        <dbReference type="Rhea" id="RHEA:24360"/>
        <dbReference type="ChEBI" id="CHEBI:15378"/>
        <dbReference type="ChEBI" id="CHEBI:29033"/>
        <dbReference type="ChEBI" id="CHEBI:58351"/>
        <dbReference type="ChEBI" id="CHEBI:60052"/>
        <dbReference type="EC" id="4.99.1.4"/>
    </reaction>
</comment>
<comment type="pathway">
    <text evidence="1">Cofactor biosynthesis; adenosylcobalamin biosynthesis; precorrin-2 from uroporphyrinogen III: step 1/1.</text>
</comment>
<comment type="pathway">
    <text evidence="1">Cofactor biosynthesis; adenosylcobalamin biosynthesis; sirohydrochlorin from precorrin-2: step 1/1.</text>
</comment>
<comment type="pathway">
    <text evidence="1">Porphyrin-containing compound metabolism; siroheme biosynthesis; precorrin-2 from uroporphyrinogen III: step 1/1.</text>
</comment>
<comment type="pathway">
    <text evidence="1">Porphyrin-containing compound metabolism; siroheme biosynthesis; siroheme from sirohydrochlorin: step 1/1.</text>
</comment>
<comment type="pathway">
    <text evidence="1">Porphyrin-containing compound metabolism; siroheme biosynthesis; sirohydrochlorin from precorrin-2: step 1/1.</text>
</comment>
<comment type="similarity">
    <text evidence="1">In the N-terminal section; belongs to the precorrin-2 dehydrogenase / sirohydrochlorin ferrochelatase family.</text>
</comment>
<comment type="similarity">
    <text evidence="1">In the C-terminal section; belongs to the precorrin methyltransferase family.</text>
</comment>
<feature type="chain" id="PRO_1000215848" description="Siroheme synthase">
    <location>
        <begin position="1"/>
        <end position="468"/>
    </location>
</feature>
<feature type="region of interest" description="Precorrin-2 dehydrogenase /sirohydrochlorin ferrochelatase" evidence="1">
    <location>
        <begin position="1"/>
        <end position="202"/>
    </location>
</feature>
<feature type="region of interest" description="Uroporphyrinogen-III C-methyltransferase" evidence="1">
    <location>
        <begin position="214"/>
        <end position="468"/>
    </location>
</feature>
<feature type="active site" description="Proton acceptor" evidence="1">
    <location>
        <position position="246"/>
    </location>
</feature>
<feature type="active site" description="Proton donor" evidence="1">
    <location>
        <position position="268"/>
    </location>
</feature>
<feature type="binding site" evidence="1">
    <location>
        <begin position="22"/>
        <end position="23"/>
    </location>
    <ligand>
        <name>NAD(+)</name>
        <dbReference type="ChEBI" id="CHEBI:57540"/>
    </ligand>
</feature>
<feature type="binding site" evidence="1">
    <location>
        <begin position="43"/>
        <end position="44"/>
    </location>
    <ligand>
        <name>NAD(+)</name>
        <dbReference type="ChEBI" id="CHEBI:57540"/>
    </ligand>
</feature>
<feature type="binding site" evidence="1">
    <location>
        <position position="223"/>
    </location>
    <ligand>
        <name>S-adenosyl-L-methionine</name>
        <dbReference type="ChEBI" id="CHEBI:59789"/>
    </ligand>
</feature>
<feature type="binding site" evidence="1">
    <location>
        <begin position="299"/>
        <end position="301"/>
    </location>
    <ligand>
        <name>S-adenosyl-L-methionine</name>
        <dbReference type="ChEBI" id="CHEBI:59789"/>
    </ligand>
</feature>
<feature type="binding site" evidence="1">
    <location>
        <begin position="329"/>
        <end position="330"/>
    </location>
    <ligand>
        <name>S-adenosyl-L-methionine</name>
        <dbReference type="ChEBI" id="CHEBI:59789"/>
    </ligand>
</feature>
<feature type="binding site" evidence="1">
    <location>
        <position position="381"/>
    </location>
    <ligand>
        <name>S-adenosyl-L-methionine</name>
        <dbReference type="ChEBI" id="CHEBI:59789"/>
    </ligand>
</feature>
<feature type="binding site" evidence="1">
    <location>
        <position position="410"/>
    </location>
    <ligand>
        <name>S-adenosyl-L-methionine</name>
        <dbReference type="ChEBI" id="CHEBI:59789"/>
    </ligand>
</feature>
<feature type="modified residue" description="Phosphoserine" evidence="1">
    <location>
        <position position="126"/>
    </location>
</feature>
<organism>
    <name type="scientific">Tolumonas auensis (strain DSM 9187 / NBRC 110442 / TA 4)</name>
    <dbReference type="NCBI Taxonomy" id="595494"/>
    <lineage>
        <taxon>Bacteria</taxon>
        <taxon>Pseudomonadati</taxon>
        <taxon>Pseudomonadota</taxon>
        <taxon>Gammaproteobacteria</taxon>
        <taxon>Aeromonadales</taxon>
        <taxon>Aeromonadaceae</taxon>
        <taxon>Tolumonas</taxon>
    </lineage>
</organism>
<reference key="1">
    <citation type="submission" date="2009-05" db="EMBL/GenBank/DDBJ databases">
        <title>Complete sequence of Tolumonas auensis DSM 9187.</title>
        <authorList>
            <consortium name="US DOE Joint Genome Institute"/>
            <person name="Lucas S."/>
            <person name="Copeland A."/>
            <person name="Lapidus A."/>
            <person name="Glavina del Rio T."/>
            <person name="Tice H."/>
            <person name="Bruce D."/>
            <person name="Goodwin L."/>
            <person name="Pitluck S."/>
            <person name="Chertkov O."/>
            <person name="Brettin T."/>
            <person name="Detter J.C."/>
            <person name="Han C."/>
            <person name="Larimer F."/>
            <person name="Land M."/>
            <person name="Hauser L."/>
            <person name="Kyrpides N."/>
            <person name="Mikhailova N."/>
            <person name="Spring S."/>
            <person name="Beller H."/>
        </authorList>
    </citation>
    <scope>NUCLEOTIDE SEQUENCE [LARGE SCALE GENOMIC DNA]</scope>
    <source>
        <strain>DSM 9187 / NBRC 110442 / TA 4</strain>
    </source>
</reference>
<keyword id="KW-0169">Cobalamin biosynthesis</keyword>
<keyword id="KW-0456">Lyase</keyword>
<keyword id="KW-0489">Methyltransferase</keyword>
<keyword id="KW-0511">Multifunctional enzyme</keyword>
<keyword id="KW-0520">NAD</keyword>
<keyword id="KW-0560">Oxidoreductase</keyword>
<keyword id="KW-0597">Phosphoprotein</keyword>
<keyword id="KW-0627">Porphyrin biosynthesis</keyword>
<keyword id="KW-1185">Reference proteome</keyword>
<keyword id="KW-0949">S-adenosyl-L-methionine</keyword>
<keyword id="KW-0808">Transferase</keyword>
<accession>C4LAG5</accession>
<proteinExistence type="inferred from homology"/>
<gene>
    <name evidence="1" type="primary">cysG</name>
    <name type="ordered locus">Tola_2546</name>
</gene>
<protein>
    <recommendedName>
        <fullName evidence="1">Siroheme synthase</fullName>
    </recommendedName>
    <domain>
        <recommendedName>
            <fullName evidence="1">Uroporphyrinogen-III C-methyltransferase</fullName>
            <shortName evidence="1">Urogen III methylase</shortName>
            <ecNumber evidence="1">2.1.1.107</ecNumber>
        </recommendedName>
        <alternativeName>
            <fullName evidence="1">SUMT</fullName>
        </alternativeName>
        <alternativeName>
            <fullName evidence="1">Uroporphyrinogen III methylase</fullName>
            <shortName evidence="1">UROM</shortName>
        </alternativeName>
    </domain>
    <domain>
        <recommendedName>
            <fullName evidence="1">Precorrin-2 dehydrogenase</fullName>
            <ecNumber evidence="1">1.3.1.76</ecNumber>
        </recommendedName>
    </domain>
    <domain>
        <recommendedName>
            <fullName evidence="1">Sirohydrochlorin ferrochelatase</fullName>
            <ecNumber evidence="1">4.99.1.4</ecNumber>
        </recommendedName>
    </domain>
</protein>
<evidence type="ECO:0000255" key="1">
    <source>
        <dbReference type="HAMAP-Rule" id="MF_01646"/>
    </source>
</evidence>